<accession>P29623</accession>
<sequence>SLSDKDKAAVRALWSTISKSSDAIGNDALSRMIVVYPQTKIYFSHWPEVIPGSIHIKEHGKKVMGGIELAVSKIDDLKTGLFELSEQHAFKLRVDPGNFKILNHCILVVIATMFPKEFTPEAHVSLDKFLSGVALALAERYR</sequence>
<proteinExistence type="evidence at protein level"/>
<keyword id="KW-0007">Acetylation</keyword>
<keyword id="KW-0903">Direct protein sequencing</keyword>
<keyword id="KW-0349">Heme</keyword>
<keyword id="KW-0408">Iron</keyword>
<keyword id="KW-0479">Metal-binding</keyword>
<keyword id="KW-0561">Oxygen transport</keyword>
<keyword id="KW-1185">Reference proteome</keyword>
<keyword id="KW-0813">Transport</keyword>
<reference key="1">
    <citation type="journal article" date="1992" name="Arch. Biochem. Biophys.">
        <title>The amino acid sequence and oxygen-binding properties of the single hemoglobin of the cold-adapted Antarctic teleost Gymnodraco acuticeps.</title>
        <authorList>
            <person name="Tamburrini M."/>
            <person name="Brancaccio A."/>
            <person name="Ippoliti R."/>
            <person name="di Prisco G."/>
        </authorList>
    </citation>
    <scope>PROTEIN SEQUENCE</scope>
    <scope>ACETYLATION AT SER-1</scope>
</reference>
<name>HBA_GYMAC</name>
<protein>
    <recommendedName>
        <fullName>Hemoglobin subunit alpha</fullName>
    </recommendedName>
    <alternativeName>
        <fullName>Alpha-globin</fullName>
    </alternativeName>
    <alternativeName>
        <fullName>Hemoglobin alpha chain</fullName>
    </alternativeName>
</protein>
<evidence type="ECO:0000255" key="1">
    <source>
        <dbReference type="PROSITE-ProRule" id="PRU00238"/>
    </source>
</evidence>
<evidence type="ECO:0000269" key="2">
    <source>
    </source>
</evidence>
<gene>
    <name type="primary">hba</name>
</gene>
<feature type="chain" id="PRO_0000052644" description="Hemoglobin subunit alpha">
    <location>
        <begin position="1"/>
        <end position="142"/>
    </location>
</feature>
<feature type="domain" description="Globin" evidence="1">
    <location>
        <begin position="1"/>
        <end position="142"/>
    </location>
</feature>
<feature type="binding site" evidence="1">
    <location>
        <position position="59"/>
    </location>
    <ligand>
        <name>O2</name>
        <dbReference type="ChEBI" id="CHEBI:15379"/>
    </ligand>
</feature>
<feature type="binding site" description="proximal binding residue" evidence="1">
    <location>
        <position position="88"/>
    </location>
    <ligand>
        <name>heme b</name>
        <dbReference type="ChEBI" id="CHEBI:60344"/>
    </ligand>
    <ligandPart>
        <name>Fe</name>
        <dbReference type="ChEBI" id="CHEBI:18248"/>
    </ligandPart>
</feature>
<feature type="modified residue" description="N-acetylserine" evidence="2">
    <location>
        <position position="1"/>
    </location>
</feature>
<dbReference type="PIR" id="S20270">
    <property type="entry name" value="S20270"/>
</dbReference>
<dbReference type="SMR" id="P29623"/>
<dbReference type="iPTMnet" id="P29623"/>
<dbReference type="InParanoid" id="P29623"/>
<dbReference type="Proteomes" id="UP000515161">
    <property type="component" value="Unplaced"/>
</dbReference>
<dbReference type="GO" id="GO:0072562">
    <property type="term" value="C:blood microparticle"/>
    <property type="evidence" value="ECO:0007669"/>
    <property type="project" value="TreeGrafter"/>
</dbReference>
<dbReference type="GO" id="GO:0031838">
    <property type="term" value="C:haptoglobin-hemoglobin complex"/>
    <property type="evidence" value="ECO:0007669"/>
    <property type="project" value="TreeGrafter"/>
</dbReference>
<dbReference type="GO" id="GO:0005833">
    <property type="term" value="C:hemoglobin complex"/>
    <property type="evidence" value="ECO:0007669"/>
    <property type="project" value="InterPro"/>
</dbReference>
<dbReference type="GO" id="GO:0031720">
    <property type="term" value="F:haptoglobin binding"/>
    <property type="evidence" value="ECO:0007669"/>
    <property type="project" value="TreeGrafter"/>
</dbReference>
<dbReference type="GO" id="GO:0020037">
    <property type="term" value="F:heme binding"/>
    <property type="evidence" value="ECO:0007669"/>
    <property type="project" value="InterPro"/>
</dbReference>
<dbReference type="GO" id="GO:0005506">
    <property type="term" value="F:iron ion binding"/>
    <property type="evidence" value="ECO:0007669"/>
    <property type="project" value="InterPro"/>
</dbReference>
<dbReference type="GO" id="GO:0043177">
    <property type="term" value="F:organic acid binding"/>
    <property type="evidence" value="ECO:0007669"/>
    <property type="project" value="TreeGrafter"/>
</dbReference>
<dbReference type="GO" id="GO:0019825">
    <property type="term" value="F:oxygen binding"/>
    <property type="evidence" value="ECO:0007669"/>
    <property type="project" value="InterPro"/>
</dbReference>
<dbReference type="GO" id="GO:0005344">
    <property type="term" value="F:oxygen carrier activity"/>
    <property type="evidence" value="ECO:0007669"/>
    <property type="project" value="UniProtKB-KW"/>
</dbReference>
<dbReference type="GO" id="GO:0004601">
    <property type="term" value="F:peroxidase activity"/>
    <property type="evidence" value="ECO:0007669"/>
    <property type="project" value="TreeGrafter"/>
</dbReference>
<dbReference type="GO" id="GO:0042744">
    <property type="term" value="P:hydrogen peroxide catabolic process"/>
    <property type="evidence" value="ECO:0007669"/>
    <property type="project" value="TreeGrafter"/>
</dbReference>
<dbReference type="CDD" id="cd08927">
    <property type="entry name" value="Hb-alpha-like"/>
    <property type="match status" value="1"/>
</dbReference>
<dbReference type="FunFam" id="1.10.490.10:FF:000002">
    <property type="entry name" value="Hemoglobin subunit alpha"/>
    <property type="match status" value="1"/>
</dbReference>
<dbReference type="Gene3D" id="1.10.490.10">
    <property type="entry name" value="Globins"/>
    <property type="match status" value="1"/>
</dbReference>
<dbReference type="InterPro" id="IPR000971">
    <property type="entry name" value="Globin"/>
</dbReference>
<dbReference type="InterPro" id="IPR009050">
    <property type="entry name" value="Globin-like_sf"/>
</dbReference>
<dbReference type="InterPro" id="IPR012292">
    <property type="entry name" value="Globin/Proto"/>
</dbReference>
<dbReference type="InterPro" id="IPR002338">
    <property type="entry name" value="Hemoglobin_a-typ"/>
</dbReference>
<dbReference type="InterPro" id="IPR050056">
    <property type="entry name" value="Hemoglobin_oxygen_transport"/>
</dbReference>
<dbReference type="InterPro" id="IPR002339">
    <property type="entry name" value="Hemoglobin_pi"/>
</dbReference>
<dbReference type="PANTHER" id="PTHR11442">
    <property type="entry name" value="HEMOGLOBIN FAMILY MEMBER"/>
    <property type="match status" value="1"/>
</dbReference>
<dbReference type="PANTHER" id="PTHR11442:SF41">
    <property type="entry name" value="HEMOGLOBIN SUBUNIT ZETA"/>
    <property type="match status" value="1"/>
</dbReference>
<dbReference type="Pfam" id="PF00042">
    <property type="entry name" value="Globin"/>
    <property type="match status" value="1"/>
</dbReference>
<dbReference type="PRINTS" id="PR00612">
    <property type="entry name" value="ALPHAHAEM"/>
</dbReference>
<dbReference type="PRINTS" id="PR00815">
    <property type="entry name" value="PIHAEM"/>
</dbReference>
<dbReference type="SUPFAM" id="SSF46458">
    <property type="entry name" value="Globin-like"/>
    <property type="match status" value="1"/>
</dbReference>
<dbReference type="PROSITE" id="PS01033">
    <property type="entry name" value="GLOBIN"/>
    <property type="match status" value="1"/>
</dbReference>
<comment type="function">
    <text>Involved in oxygen transport from gills to the various peripheral tissues.</text>
</comment>
<comment type="subunit">
    <text>Heterotetramer of two alpha chains and two beta chains.</text>
</comment>
<comment type="tissue specificity">
    <text>Red blood cells.</text>
</comment>
<comment type="similarity">
    <text evidence="1">Belongs to the globin family.</text>
</comment>
<organism>
    <name type="scientific">Gymnodraco acuticeps</name>
    <name type="common">Antarctic dragonfish</name>
    <dbReference type="NCBI Taxonomy" id="8218"/>
    <lineage>
        <taxon>Eukaryota</taxon>
        <taxon>Metazoa</taxon>
        <taxon>Chordata</taxon>
        <taxon>Craniata</taxon>
        <taxon>Vertebrata</taxon>
        <taxon>Euteleostomi</taxon>
        <taxon>Actinopterygii</taxon>
        <taxon>Neopterygii</taxon>
        <taxon>Teleostei</taxon>
        <taxon>Neoteleostei</taxon>
        <taxon>Acanthomorphata</taxon>
        <taxon>Eupercaria</taxon>
        <taxon>Perciformes</taxon>
        <taxon>Notothenioidei</taxon>
        <taxon>Bathydraconidae</taxon>
        <taxon>Gymnodraco</taxon>
    </lineage>
</organism>